<comment type="subunit">
    <text evidence="1">Part of the 50S ribosomal subunit. Contacts protein L32.</text>
</comment>
<comment type="similarity">
    <text evidence="1">Belongs to the bacterial ribosomal protein bL17 family.</text>
</comment>
<feature type="chain" id="PRO_1000087167" description="Large ribosomal subunit protein bL17">
    <location>
        <begin position="1"/>
        <end position="126"/>
    </location>
</feature>
<sequence length="126" mass="14543">MHHRKSGRHLNRTSAHRKAMLRNMAVSLFQHELIKTTLPKAKELRRVVEPLITLAKEDTVANRRLAFNRLRDDAIVAKLFKEIAPRHKERPGGYCRVLKYGFRNGDSAPMAIVELVDREESESSED</sequence>
<protein>
    <recommendedName>
        <fullName evidence="1">Large ribosomal subunit protein bL17</fullName>
    </recommendedName>
    <alternativeName>
        <fullName evidence="2">50S ribosomal protein L17</fullName>
    </alternativeName>
</protein>
<organism>
    <name type="scientific">Coxiella burnetii (strain Dugway 5J108-111)</name>
    <dbReference type="NCBI Taxonomy" id="434922"/>
    <lineage>
        <taxon>Bacteria</taxon>
        <taxon>Pseudomonadati</taxon>
        <taxon>Pseudomonadota</taxon>
        <taxon>Gammaproteobacteria</taxon>
        <taxon>Legionellales</taxon>
        <taxon>Coxiellaceae</taxon>
        <taxon>Coxiella</taxon>
    </lineage>
</organism>
<dbReference type="EMBL" id="CP000733">
    <property type="protein sequence ID" value="ABS78217.1"/>
    <property type="molecule type" value="Genomic_DNA"/>
</dbReference>
<dbReference type="RefSeq" id="WP_010957469.1">
    <property type="nucleotide sequence ID" value="NC_009727.1"/>
</dbReference>
<dbReference type="SMR" id="A9KD05"/>
<dbReference type="KEGG" id="cbd:CBUD_1828"/>
<dbReference type="HOGENOM" id="CLU_074407_2_0_6"/>
<dbReference type="Proteomes" id="UP000008555">
    <property type="component" value="Chromosome"/>
</dbReference>
<dbReference type="GO" id="GO:0022625">
    <property type="term" value="C:cytosolic large ribosomal subunit"/>
    <property type="evidence" value="ECO:0007669"/>
    <property type="project" value="TreeGrafter"/>
</dbReference>
<dbReference type="GO" id="GO:0003735">
    <property type="term" value="F:structural constituent of ribosome"/>
    <property type="evidence" value="ECO:0007669"/>
    <property type="project" value="InterPro"/>
</dbReference>
<dbReference type="GO" id="GO:0006412">
    <property type="term" value="P:translation"/>
    <property type="evidence" value="ECO:0007669"/>
    <property type="project" value="UniProtKB-UniRule"/>
</dbReference>
<dbReference type="FunFam" id="3.90.1030.10:FF:000001">
    <property type="entry name" value="50S ribosomal protein L17"/>
    <property type="match status" value="1"/>
</dbReference>
<dbReference type="Gene3D" id="3.90.1030.10">
    <property type="entry name" value="Ribosomal protein L17"/>
    <property type="match status" value="1"/>
</dbReference>
<dbReference type="HAMAP" id="MF_01368">
    <property type="entry name" value="Ribosomal_bL17"/>
    <property type="match status" value="1"/>
</dbReference>
<dbReference type="InterPro" id="IPR000456">
    <property type="entry name" value="Ribosomal_bL17"/>
</dbReference>
<dbReference type="InterPro" id="IPR047859">
    <property type="entry name" value="Ribosomal_bL17_CS"/>
</dbReference>
<dbReference type="InterPro" id="IPR036373">
    <property type="entry name" value="Ribosomal_bL17_sf"/>
</dbReference>
<dbReference type="NCBIfam" id="TIGR00059">
    <property type="entry name" value="L17"/>
    <property type="match status" value="1"/>
</dbReference>
<dbReference type="PANTHER" id="PTHR14413:SF16">
    <property type="entry name" value="LARGE RIBOSOMAL SUBUNIT PROTEIN BL17M"/>
    <property type="match status" value="1"/>
</dbReference>
<dbReference type="PANTHER" id="PTHR14413">
    <property type="entry name" value="RIBOSOMAL PROTEIN L17"/>
    <property type="match status" value="1"/>
</dbReference>
<dbReference type="Pfam" id="PF01196">
    <property type="entry name" value="Ribosomal_L17"/>
    <property type="match status" value="1"/>
</dbReference>
<dbReference type="SUPFAM" id="SSF64263">
    <property type="entry name" value="Prokaryotic ribosomal protein L17"/>
    <property type="match status" value="1"/>
</dbReference>
<dbReference type="PROSITE" id="PS01167">
    <property type="entry name" value="RIBOSOMAL_L17"/>
    <property type="match status" value="1"/>
</dbReference>
<name>RL17_COXBN</name>
<proteinExistence type="inferred from homology"/>
<keyword id="KW-0687">Ribonucleoprotein</keyword>
<keyword id="KW-0689">Ribosomal protein</keyword>
<reference key="1">
    <citation type="journal article" date="2009" name="Infect. Immun.">
        <title>Comparative genomics reveal extensive transposon-mediated genomic plasticity and diversity among potential effector proteins within the genus Coxiella.</title>
        <authorList>
            <person name="Beare P.A."/>
            <person name="Unsworth N."/>
            <person name="Andoh M."/>
            <person name="Voth D.E."/>
            <person name="Omsland A."/>
            <person name="Gilk S.D."/>
            <person name="Williams K.P."/>
            <person name="Sobral B.W."/>
            <person name="Kupko J.J. III"/>
            <person name="Porcella S.F."/>
            <person name="Samuel J.E."/>
            <person name="Heinzen R.A."/>
        </authorList>
    </citation>
    <scope>NUCLEOTIDE SEQUENCE [LARGE SCALE GENOMIC DNA]</scope>
    <source>
        <strain>Dugway 5J108-111</strain>
    </source>
</reference>
<evidence type="ECO:0000255" key="1">
    <source>
        <dbReference type="HAMAP-Rule" id="MF_01368"/>
    </source>
</evidence>
<evidence type="ECO:0000305" key="2"/>
<gene>
    <name evidence="1" type="primary">rplQ</name>
    <name type="ordered locus">CBUD_1828</name>
</gene>
<accession>A9KD05</accession>